<gene>
    <name evidence="1" type="primary">murD</name>
    <name type="ordered locus">MXAN_5606</name>
</gene>
<name>MURD_MYXXD</name>
<organism>
    <name type="scientific">Myxococcus xanthus (strain DK1622)</name>
    <dbReference type="NCBI Taxonomy" id="246197"/>
    <lineage>
        <taxon>Bacteria</taxon>
        <taxon>Pseudomonadati</taxon>
        <taxon>Myxococcota</taxon>
        <taxon>Myxococcia</taxon>
        <taxon>Myxococcales</taxon>
        <taxon>Cystobacterineae</taxon>
        <taxon>Myxococcaceae</taxon>
        <taxon>Myxococcus</taxon>
    </lineage>
</organism>
<keyword id="KW-0067">ATP-binding</keyword>
<keyword id="KW-0131">Cell cycle</keyword>
<keyword id="KW-0132">Cell division</keyword>
<keyword id="KW-0133">Cell shape</keyword>
<keyword id="KW-0961">Cell wall biogenesis/degradation</keyword>
<keyword id="KW-0963">Cytoplasm</keyword>
<keyword id="KW-0436">Ligase</keyword>
<keyword id="KW-0547">Nucleotide-binding</keyword>
<keyword id="KW-0573">Peptidoglycan synthesis</keyword>
<keyword id="KW-1185">Reference proteome</keyword>
<evidence type="ECO:0000255" key="1">
    <source>
        <dbReference type="HAMAP-Rule" id="MF_00639"/>
    </source>
</evidence>
<sequence length="455" mass="46822">MTLALSGQKVLVFGLAKSGVAALRLLRQQGADVTALDARGEDALGAVAHEVKALGATRVSGPTPPGLLASQDLVVVSPGVPLALPEIQAARAAGVAVWGEVELAGRMLSGVPLFGITGTNGKSTTTALTGTLFASGDKRTFVGGNLGRPFSEAAMSPGDWDALVVELSSYQLEGIRTLRPRGAAILNLTPDHIDRYPSHAAYGEAKARIFQNQQAGDFVVVNADDADVLGLARAAKAPVYGFSLTGKPVADAPALAGLAVVEPGGFRLAFLGEHYTLTNRALRGAHNAQNAMAAALLARLGGVASGAVQAGLDGYPGLPHRLESVRVLDGVEWVNDSKATNVDSVLVALRAFSQGVWLIAGGKGKGAPYAPMVEAGQGKVKGVLTIGDDADTLARAYAGAAQVHACGTLAHAVARARELAERGDTVLLSPACASFDQFKNFEDRGDSFKRLVEAL</sequence>
<proteinExistence type="inferred from homology"/>
<reference key="1">
    <citation type="journal article" date="2006" name="Proc. Natl. Acad. Sci. U.S.A.">
        <title>Evolution of sensory complexity recorded in a myxobacterial genome.</title>
        <authorList>
            <person name="Goldman B.S."/>
            <person name="Nierman W.C."/>
            <person name="Kaiser D."/>
            <person name="Slater S.C."/>
            <person name="Durkin A.S."/>
            <person name="Eisen J.A."/>
            <person name="Ronning C.M."/>
            <person name="Barbazuk W.B."/>
            <person name="Blanchard M."/>
            <person name="Field C."/>
            <person name="Halling C."/>
            <person name="Hinkle G."/>
            <person name="Iartchuk O."/>
            <person name="Kim H.S."/>
            <person name="Mackenzie C."/>
            <person name="Madupu R."/>
            <person name="Miller N."/>
            <person name="Shvartsbeyn A."/>
            <person name="Sullivan S.A."/>
            <person name="Vaudin M."/>
            <person name="Wiegand R."/>
            <person name="Kaplan H.B."/>
        </authorList>
    </citation>
    <scope>NUCLEOTIDE SEQUENCE [LARGE SCALE GENOMIC DNA]</scope>
    <source>
        <strain>DK1622</strain>
    </source>
</reference>
<protein>
    <recommendedName>
        <fullName evidence="1">UDP-N-acetylmuramoylalanine--D-glutamate ligase</fullName>
        <ecNumber evidence="1">6.3.2.9</ecNumber>
    </recommendedName>
    <alternativeName>
        <fullName evidence="1">D-glutamic acid-adding enzyme</fullName>
    </alternativeName>
    <alternativeName>
        <fullName evidence="1">UDP-N-acetylmuramoyl-L-alanyl-D-glutamate synthetase</fullName>
    </alternativeName>
</protein>
<accession>Q1D0S8</accession>
<dbReference type="EC" id="6.3.2.9" evidence="1"/>
<dbReference type="EMBL" id="CP000113">
    <property type="protein sequence ID" value="ABF92624.1"/>
    <property type="molecule type" value="Genomic_DNA"/>
</dbReference>
<dbReference type="RefSeq" id="WP_011555560.1">
    <property type="nucleotide sequence ID" value="NC_008095.1"/>
</dbReference>
<dbReference type="SMR" id="Q1D0S8"/>
<dbReference type="STRING" id="246197.MXAN_5606"/>
<dbReference type="EnsemblBacteria" id="ABF92624">
    <property type="protein sequence ID" value="ABF92624"/>
    <property type="gene ID" value="MXAN_5606"/>
</dbReference>
<dbReference type="GeneID" id="41362852"/>
<dbReference type="KEGG" id="mxa:MXAN_5606"/>
<dbReference type="eggNOG" id="COG0771">
    <property type="taxonomic scope" value="Bacteria"/>
</dbReference>
<dbReference type="HOGENOM" id="CLU_032540_0_0_7"/>
<dbReference type="OrthoDB" id="9809796at2"/>
<dbReference type="UniPathway" id="UPA00219"/>
<dbReference type="Proteomes" id="UP000002402">
    <property type="component" value="Chromosome"/>
</dbReference>
<dbReference type="GO" id="GO:0005737">
    <property type="term" value="C:cytoplasm"/>
    <property type="evidence" value="ECO:0007669"/>
    <property type="project" value="UniProtKB-SubCell"/>
</dbReference>
<dbReference type="GO" id="GO:0005524">
    <property type="term" value="F:ATP binding"/>
    <property type="evidence" value="ECO:0007669"/>
    <property type="project" value="UniProtKB-UniRule"/>
</dbReference>
<dbReference type="GO" id="GO:0008764">
    <property type="term" value="F:UDP-N-acetylmuramoylalanine-D-glutamate ligase activity"/>
    <property type="evidence" value="ECO:0007669"/>
    <property type="project" value="UniProtKB-UniRule"/>
</dbReference>
<dbReference type="GO" id="GO:0051301">
    <property type="term" value="P:cell division"/>
    <property type="evidence" value="ECO:0007669"/>
    <property type="project" value="UniProtKB-KW"/>
</dbReference>
<dbReference type="GO" id="GO:0071555">
    <property type="term" value="P:cell wall organization"/>
    <property type="evidence" value="ECO:0007669"/>
    <property type="project" value="UniProtKB-KW"/>
</dbReference>
<dbReference type="GO" id="GO:0009252">
    <property type="term" value="P:peptidoglycan biosynthetic process"/>
    <property type="evidence" value="ECO:0007669"/>
    <property type="project" value="UniProtKB-UniRule"/>
</dbReference>
<dbReference type="GO" id="GO:0008360">
    <property type="term" value="P:regulation of cell shape"/>
    <property type="evidence" value="ECO:0007669"/>
    <property type="project" value="UniProtKB-KW"/>
</dbReference>
<dbReference type="Gene3D" id="3.90.190.20">
    <property type="entry name" value="Mur ligase, C-terminal domain"/>
    <property type="match status" value="1"/>
</dbReference>
<dbReference type="Gene3D" id="3.40.1190.10">
    <property type="entry name" value="Mur-like, catalytic domain"/>
    <property type="match status" value="1"/>
</dbReference>
<dbReference type="Gene3D" id="3.40.50.720">
    <property type="entry name" value="NAD(P)-binding Rossmann-like Domain"/>
    <property type="match status" value="1"/>
</dbReference>
<dbReference type="HAMAP" id="MF_00639">
    <property type="entry name" value="MurD"/>
    <property type="match status" value="1"/>
</dbReference>
<dbReference type="InterPro" id="IPR036565">
    <property type="entry name" value="Mur-like_cat_sf"/>
</dbReference>
<dbReference type="InterPro" id="IPR004101">
    <property type="entry name" value="Mur_ligase_C"/>
</dbReference>
<dbReference type="InterPro" id="IPR036615">
    <property type="entry name" value="Mur_ligase_C_dom_sf"/>
</dbReference>
<dbReference type="InterPro" id="IPR013221">
    <property type="entry name" value="Mur_ligase_cen"/>
</dbReference>
<dbReference type="InterPro" id="IPR005762">
    <property type="entry name" value="MurD"/>
</dbReference>
<dbReference type="NCBIfam" id="TIGR01087">
    <property type="entry name" value="murD"/>
    <property type="match status" value="1"/>
</dbReference>
<dbReference type="PANTHER" id="PTHR43692">
    <property type="entry name" value="UDP-N-ACETYLMURAMOYLALANINE--D-GLUTAMATE LIGASE"/>
    <property type="match status" value="1"/>
</dbReference>
<dbReference type="PANTHER" id="PTHR43692:SF1">
    <property type="entry name" value="UDP-N-ACETYLMURAMOYLALANINE--D-GLUTAMATE LIGASE"/>
    <property type="match status" value="1"/>
</dbReference>
<dbReference type="Pfam" id="PF02875">
    <property type="entry name" value="Mur_ligase_C"/>
    <property type="match status" value="1"/>
</dbReference>
<dbReference type="Pfam" id="PF08245">
    <property type="entry name" value="Mur_ligase_M"/>
    <property type="match status" value="1"/>
</dbReference>
<dbReference type="Pfam" id="PF21799">
    <property type="entry name" value="MurD-like_N"/>
    <property type="match status" value="1"/>
</dbReference>
<dbReference type="SUPFAM" id="SSF51984">
    <property type="entry name" value="MurCD N-terminal domain"/>
    <property type="match status" value="1"/>
</dbReference>
<dbReference type="SUPFAM" id="SSF53623">
    <property type="entry name" value="MurD-like peptide ligases, catalytic domain"/>
    <property type="match status" value="1"/>
</dbReference>
<dbReference type="SUPFAM" id="SSF53244">
    <property type="entry name" value="MurD-like peptide ligases, peptide-binding domain"/>
    <property type="match status" value="1"/>
</dbReference>
<feature type="chain" id="PRO_0000257205" description="UDP-N-acetylmuramoylalanine--D-glutamate ligase">
    <location>
        <begin position="1"/>
        <end position="455"/>
    </location>
</feature>
<feature type="binding site" evidence="1">
    <location>
        <begin position="118"/>
        <end position="124"/>
    </location>
    <ligand>
        <name>ATP</name>
        <dbReference type="ChEBI" id="CHEBI:30616"/>
    </ligand>
</feature>
<comment type="function">
    <text evidence="1">Cell wall formation. Catalyzes the addition of glutamate to the nucleotide precursor UDP-N-acetylmuramoyl-L-alanine (UMA).</text>
</comment>
<comment type="catalytic activity">
    <reaction evidence="1">
        <text>UDP-N-acetyl-alpha-D-muramoyl-L-alanine + D-glutamate + ATP = UDP-N-acetyl-alpha-D-muramoyl-L-alanyl-D-glutamate + ADP + phosphate + H(+)</text>
        <dbReference type="Rhea" id="RHEA:16429"/>
        <dbReference type="ChEBI" id="CHEBI:15378"/>
        <dbReference type="ChEBI" id="CHEBI:29986"/>
        <dbReference type="ChEBI" id="CHEBI:30616"/>
        <dbReference type="ChEBI" id="CHEBI:43474"/>
        <dbReference type="ChEBI" id="CHEBI:83898"/>
        <dbReference type="ChEBI" id="CHEBI:83900"/>
        <dbReference type="ChEBI" id="CHEBI:456216"/>
        <dbReference type="EC" id="6.3.2.9"/>
    </reaction>
</comment>
<comment type="pathway">
    <text evidence="1">Cell wall biogenesis; peptidoglycan biosynthesis.</text>
</comment>
<comment type="subcellular location">
    <subcellularLocation>
        <location evidence="1">Cytoplasm</location>
    </subcellularLocation>
</comment>
<comment type="similarity">
    <text evidence="1">Belongs to the MurCDEF family.</text>
</comment>